<dbReference type="GO" id="GO:0005581">
    <property type="term" value="C:collagen trimer"/>
    <property type="evidence" value="ECO:0007669"/>
    <property type="project" value="UniProtKB-KW"/>
</dbReference>
<dbReference type="GO" id="GO:0031012">
    <property type="term" value="C:extracellular matrix"/>
    <property type="evidence" value="ECO:0007669"/>
    <property type="project" value="TreeGrafter"/>
</dbReference>
<dbReference type="GO" id="GO:0005615">
    <property type="term" value="C:extracellular space"/>
    <property type="evidence" value="ECO:0007669"/>
    <property type="project" value="TreeGrafter"/>
</dbReference>
<dbReference type="GO" id="GO:0030020">
    <property type="term" value="F:extracellular matrix structural constituent conferring tensile strength"/>
    <property type="evidence" value="ECO:0007669"/>
    <property type="project" value="TreeGrafter"/>
</dbReference>
<dbReference type="GO" id="GO:0030198">
    <property type="term" value="P:extracellular matrix organization"/>
    <property type="evidence" value="ECO:0007669"/>
    <property type="project" value="TreeGrafter"/>
</dbReference>
<dbReference type="InterPro" id="IPR008160">
    <property type="entry name" value="Collagen"/>
</dbReference>
<dbReference type="InterPro" id="IPR050149">
    <property type="entry name" value="Collagen_superfamily"/>
</dbReference>
<dbReference type="PANTHER" id="PTHR24023:SF1112">
    <property type="entry name" value="COL_CUTICLE_N DOMAIN-CONTAINING PROTEIN-RELATED"/>
    <property type="match status" value="1"/>
</dbReference>
<dbReference type="PANTHER" id="PTHR24023">
    <property type="entry name" value="COLLAGEN ALPHA"/>
    <property type="match status" value="1"/>
</dbReference>
<dbReference type="Pfam" id="PF01391">
    <property type="entry name" value="Collagen"/>
    <property type="match status" value="13"/>
</dbReference>
<sequence length="887" mass="79760">GPMGIMGPRGPPGASGAPGPQGFQGPPGEPGEPGQTGPAGARGPPGPPGKAGEDGHPGKPGRSGERGVVGPQGARGFPGTPGIPGFKGIRGHNGIDGIKGQPGAPGVKGEPGAPGARGIPGERGRVGAPGPAGARGSDGSVGPVGPAGPIGSAGPPGFPGAPGPKGEIGPVGSPGASGPAGPRGEVGIPGVSGPVGPPGNGAAGIPGVAGAPGIPGPRGIPGPVGAAGATGARGIVGEPGPAGSKAGPQGIPGPSGEEGKRGSTGEIGPAGPPGPPGIRGSPGSRGIPGADGRAGVMGIPGSRGATGPAGVRGFPGSPGNIGPAGKEGPVGIPGIDGRPGPTGPAGARNIGFPGPKGPTGDNGDKGHAGIAGARGAPGPDGNNGAQGPPQGGKGEQGPAGPPGFQGIPGPAGTAGEAGKPGERGIPGEFGIPGPAGPRGERGPPGESGAAGPTGPIGNRGPSGPAGPDGNKGEPGVVGAPGTAGPSGPSGIPGERGAAGIPGPKGEKGEPGIRRDGARGAPGAVGAPGPAGANGDRGEAGPAGPAGPAGPRGSPGERGEVGPAGPNGFAGPAGAAGQPGAKGERGTRGDGGPPGATGFPGAAGRTGPPGPSGISGPPGPPGPAGKEGIRGPRGDQGPVGRSGETGASGPPGFAGEKTPGPQGIIGAPGFIGIPGSRGERGIPGVAGSVGEPGPIGIAGPPGARGPPGAVGNPGVNGAPGEAGRDGNPGSDGPPGRGHKGERGYPGAGAPGPQGPVGPTGKHGNRGEPGPAGVVGPTGAVGPRGPSGPQGIRGDKGEPGDKGPRGIPGIKGHNGIQGIPGIAGHHGDQGAPGSVGPAGPRGPAGPSGPVGKDGRTGHPGAVGPAGIRGSQGPAGPPGPPGPPGPPGPS</sequence>
<reference evidence="5" key="1">
    <citation type="journal article" date="2015" name="Nature">
        <title>Ancient proteins resolve the evolutionary history of Darwin's South American ungulates.</title>
        <authorList>
            <person name="Welker F."/>
            <person name="Collins M.J."/>
            <person name="Thomas J.A."/>
            <person name="Wadsley M."/>
            <person name="Brace S."/>
            <person name="Cappellini E."/>
            <person name="Turvey S.T."/>
            <person name="Reguero M."/>
            <person name="Gelfo J.N."/>
            <person name="Kramarz A."/>
            <person name="Burger J."/>
            <person name="Thomas-Oates J."/>
            <person name="Ashford D.A."/>
            <person name="Ashton P.D."/>
            <person name="Rowsell K."/>
            <person name="Porter D.M."/>
            <person name="Kessler B."/>
            <person name="Fischer R."/>
            <person name="Baessmann C."/>
            <person name="Kaspar S."/>
            <person name="Olsen J.V."/>
            <person name="Kiley P."/>
            <person name="Elliott J.A."/>
            <person name="Kelstrup C.D."/>
            <person name="Mullin V."/>
            <person name="Hofreiter M."/>
            <person name="Willerslev E."/>
            <person name="Hublin J.J."/>
            <person name="Orlando L."/>
            <person name="Barnes I."/>
            <person name="MacPhee R.D."/>
        </authorList>
    </citation>
    <scope>PROTEIN SEQUENCE</scope>
    <scope>IDENTIFICATION BY MASS SPECTROMETRY</scope>
    <source>
        <tissue evidence="4">Bone</tissue>
    </source>
</reference>
<feature type="chain" id="PRO_0000433502" description="Collagen alpha-2(I) chain" evidence="3">
    <location>
        <begin position="1"/>
        <end position="887"/>
    </location>
</feature>
<feature type="region of interest" description="Disordered" evidence="2">
    <location>
        <begin position="1"/>
        <end position="887"/>
    </location>
</feature>
<feature type="compositionally biased region" description="Low complexity" evidence="2">
    <location>
        <begin position="1"/>
        <end position="42"/>
    </location>
</feature>
<feature type="compositionally biased region" description="Basic and acidic residues" evidence="2">
    <location>
        <begin position="51"/>
        <end position="65"/>
    </location>
</feature>
<feature type="compositionally biased region" description="Low complexity" evidence="2">
    <location>
        <begin position="126"/>
        <end position="155"/>
    </location>
</feature>
<feature type="compositionally biased region" description="Low complexity" evidence="2">
    <location>
        <begin position="170"/>
        <end position="194"/>
    </location>
</feature>
<feature type="compositionally biased region" description="Low complexity" evidence="2">
    <location>
        <begin position="221"/>
        <end position="236"/>
    </location>
</feature>
<feature type="compositionally biased region" description="Low complexity" evidence="2">
    <location>
        <begin position="278"/>
        <end position="290"/>
    </location>
</feature>
<feature type="compositionally biased region" description="Low complexity" evidence="2">
    <location>
        <begin position="368"/>
        <end position="388"/>
    </location>
</feature>
<feature type="compositionally biased region" description="Low complexity" evidence="2">
    <location>
        <begin position="444"/>
        <end position="455"/>
    </location>
</feature>
<feature type="compositionally biased region" description="Low complexity" evidence="2">
    <location>
        <begin position="473"/>
        <end position="503"/>
    </location>
</feature>
<feature type="compositionally biased region" description="Basic and acidic residues" evidence="2">
    <location>
        <begin position="504"/>
        <end position="517"/>
    </location>
</feature>
<feature type="compositionally biased region" description="Low complexity" evidence="2">
    <location>
        <begin position="518"/>
        <end position="533"/>
    </location>
</feature>
<feature type="compositionally biased region" description="Low complexity" evidence="2">
    <location>
        <begin position="560"/>
        <end position="580"/>
    </location>
</feature>
<feature type="compositionally biased region" description="Low complexity" evidence="2">
    <location>
        <begin position="595"/>
        <end position="605"/>
    </location>
</feature>
<feature type="compositionally biased region" description="Low complexity" evidence="2">
    <location>
        <begin position="658"/>
        <end position="673"/>
    </location>
</feature>
<feature type="compositionally biased region" description="Low complexity" evidence="2">
    <location>
        <begin position="690"/>
        <end position="720"/>
    </location>
</feature>
<feature type="compositionally biased region" description="Low complexity" evidence="2">
    <location>
        <begin position="766"/>
        <end position="782"/>
    </location>
</feature>
<feature type="compositionally biased region" description="Basic and acidic residues" evidence="2">
    <location>
        <begin position="791"/>
        <end position="802"/>
    </location>
</feature>
<feature type="compositionally biased region" description="Pro residues" evidence="2">
    <location>
        <begin position="872"/>
        <end position="887"/>
    </location>
</feature>
<feature type="unsure residue" description="I or L" evidence="3">
    <location>
        <position position="5"/>
    </location>
</feature>
<feature type="unsure residue" description="I or L" evidence="3">
    <location>
        <position position="83"/>
    </location>
</feature>
<feature type="unsure residue" description="I or L" evidence="3">
    <location>
        <position position="89"/>
    </location>
</feature>
<feature type="unsure residue" description="I or L" evidence="3">
    <location>
        <position position="95"/>
    </location>
</feature>
<feature type="unsure residue" description="I or L" evidence="3">
    <location>
        <position position="98"/>
    </location>
</feature>
<feature type="unsure residue" description="I or L" evidence="3">
    <location>
        <position position="119"/>
    </location>
</feature>
<feature type="unsure residue" description="I or L" evidence="3">
    <location>
        <position position="150"/>
    </location>
</feature>
<feature type="unsure residue" description="I or L" evidence="3">
    <location>
        <position position="168"/>
    </location>
</feature>
<feature type="unsure residue" description="I or L" evidence="3">
    <location>
        <position position="188"/>
    </location>
</feature>
<feature type="unsure residue" description="I or L" evidence="3">
    <location>
        <position position="205"/>
    </location>
</feature>
<feature type="unsure residue" description="I or L" evidence="3">
    <location>
        <position position="214"/>
    </location>
</feature>
<feature type="unsure residue" description="I or L" evidence="3">
    <location>
        <position position="220"/>
    </location>
</feature>
<feature type="unsure residue" description="I or L" evidence="3">
    <location>
        <position position="235"/>
    </location>
</feature>
<feature type="unsure residue" description="I or L" evidence="3">
    <location>
        <position position="251"/>
    </location>
</feature>
<feature type="unsure residue" description="I or L" evidence="3">
    <location>
        <position position="267"/>
    </location>
</feature>
<feature type="unsure residue" description="I or L" evidence="3">
    <location>
        <position position="278"/>
    </location>
</feature>
<feature type="unsure residue" description="I or L" evidence="3">
    <location>
        <position position="287"/>
    </location>
</feature>
<feature type="unsure residue" description="I or L" evidence="3">
    <location>
        <position position="299"/>
    </location>
</feature>
<feature type="unsure residue" description="I or L" evidence="3">
    <location>
        <position position="321"/>
    </location>
</feature>
<feature type="unsure residue" description="I or L" evidence="3">
    <location>
        <position position="332"/>
    </location>
</feature>
<feature type="unsure residue" description="I or L" evidence="3">
    <location>
        <position position="335"/>
    </location>
</feature>
<feature type="unsure residue" description="I or L" evidence="3">
    <location>
        <position position="350"/>
    </location>
</feature>
<feature type="unsure residue" description="I or L" evidence="3">
    <location>
        <position position="370"/>
    </location>
</feature>
<feature type="unsure residue" description="I or L" evidence="3">
    <location>
        <position position="407"/>
    </location>
</feature>
<feature type="unsure residue" description="I or L" evidence="3">
    <location>
        <position position="425"/>
    </location>
</feature>
<feature type="unsure residue" description="I or L" evidence="3">
    <location>
        <position position="431"/>
    </location>
</feature>
<feature type="unsure residue" description="I or L" evidence="3">
    <location>
        <position position="456"/>
    </location>
</feature>
<feature type="unsure residue" description="I or L" evidence="3">
    <location>
        <position position="491"/>
    </location>
</feature>
<feature type="unsure residue" description="I or L" evidence="3">
    <location>
        <position position="500"/>
    </location>
</feature>
<feature type="unsure residue" description="I or L" evidence="3">
    <location>
        <position position="512"/>
    </location>
</feature>
<feature type="unsure residue" description="I or L" evidence="3">
    <location>
        <position position="613"/>
    </location>
</feature>
<feature type="unsure residue" description="I or L" evidence="3">
    <location>
        <position position="628"/>
    </location>
</feature>
<feature type="unsure residue" description="I or L" evidence="3">
    <location>
        <position position="663"/>
    </location>
</feature>
<feature type="unsure residue" description="I or L" evidence="3">
    <location>
        <position position="664"/>
    </location>
</feature>
<feature type="unsure residue" description="I or L" evidence="3">
    <location>
        <position position="670"/>
    </location>
</feature>
<feature type="unsure residue" description="I or L" evidence="3">
    <location>
        <position position="672"/>
    </location>
</feature>
<feature type="unsure residue" description="I or L" evidence="3">
    <location>
        <position position="681"/>
    </location>
</feature>
<feature type="unsure residue" description="I or L" evidence="3">
    <location>
        <position position="694"/>
    </location>
</feature>
<feature type="unsure residue" description="I or L" evidence="3">
    <location>
        <position position="696"/>
    </location>
</feature>
<feature type="unsure residue" description="I or L" evidence="3">
    <location>
        <position position="790"/>
    </location>
</feature>
<feature type="unsure residue" description="I or L" evidence="3">
    <location>
        <position position="805"/>
    </location>
</feature>
<feature type="unsure residue" description="I or L" evidence="3">
    <location>
        <position position="808"/>
    </location>
</feature>
<feature type="unsure residue" description="I or L" evidence="3">
    <location>
        <position position="814"/>
    </location>
</feature>
<feature type="unsure residue" description="I or L" evidence="3">
    <location>
        <position position="817"/>
    </location>
</feature>
<feature type="unsure residue" description="I or L" evidence="3">
    <location>
        <position position="820"/>
    </location>
</feature>
<feature type="unsure residue" description="I or L" evidence="3">
    <location>
        <position position="865"/>
    </location>
</feature>
<feature type="non-consecutive residues" evidence="4">
    <location>
        <begin position="114"/>
        <end position="115"/>
    </location>
</feature>
<feature type="non-consecutive residues" evidence="4">
    <location>
        <begin position="200"/>
        <end position="201"/>
    </location>
</feature>
<feature type="non-consecutive residues" evidence="4">
    <location>
        <begin position="245"/>
        <end position="246"/>
    </location>
</feature>
<feature type="non-consecutive residues" evidence="4">
    <location>
        <begin position="312"/>
        <end position="313"/>
    </location>
</feature>
<feature type="non-consecutive residues" evidence="4">
    <location>
        <begin position="348"/>
        <end position="349"/>
    </location>
</feature>
<feature type="non-consecutive residues" evidence="4">
    <location>
        <begin position="361"/>
        <end position="362"/>
    </location>
</feature>
<feature type="non-consecutive residues" evidence="4">
    <location>
        <begin position="389"/>
        <end position="390"/>
    </location>
</feature>
<feature type="non-consecutive residues" evidence="4">
    <location>
        <begin position="513"/>
        <end position="514"/>
    </location>
</feature>
<feature type="non-consecutive residues" evidence="4">
    <location>
        <begin position="586"/>
        <end position="587"/>
    </location>
</feature>
<feature type="non-consecutive residues" evidence="4">
    <location>
        <begin position="656"/>
        <end position="657"/>
    </location>
</feature>
<feature type="non-consecutive residues" evidence="4">
    <location>
        <begin position="735"/>
        <end position="736"/>
    </location>
</feature>
<feature type="non-consecutive residues" evidence="4">
    <location>
        <begin position="745"/>
        <end position="746"/>
    </location>
</feature>
<feature type="non-consecutive residues" evidence="4">
    <location>
        <begin position="866"/>
        <end position="867"/>
    </location>
</feature>
<evidence type="ECO:0000250" key="1">
    <source>
        <dbReference type="UniProtKB" id="P08123"/>
    </source>
</evidence>
<evidence type="ECO:0000256" key="2">
    <source>
        <dbReference type="SAM" id="MobiDB-lite"/>
    </source>
</evidence>
<evidence type="ECO:0000269" key="3">
    <source>
    </source>
</evidence>
<evidence type="ECO:0000303" key="4">
    <source>
    </source>
</evidence>
<evidence type="ECO:0000305" key="5"/>
<name>CO1A2_HIPAM</name>
<proteinExistence type="evidence at protein level"/>
<keyword id="KW-0106">Calcium</keyword>
<keyword id="KW-0176">Collagen</keyword>
<keyword id="KW-0903">Direct protein sequencing</keyword>
<keyword id="KW-0272">Extracellular matrix</keyword>
<keyword id="KW-0379">Hydroxylation</keyword>
<keyword id="KW-0677">Repeat</keyword>
<keyword id="KW-0964">Secreted</keyword>
<comment type="function">
    <text evidence="5">Type I collagen is a member of group I collagen (fibrillar forming collagen).</text>
</comment>
<comment type="subunit">
    <text evidence="1">Trimers of one alpha 2(I) and two alpha 1(I) chains. Interacts (via C-terminus) with TMEM131 (via PapD-L domain); the interaction is direct and is involved in assembly and TRAPPIII ER-to-Golgi transport complex-dependent secretion of collagen.</text>
</comment>
<comment type="subcellular location">
    <subcellularLocation>
        <location>Secreted</location>
    </subcellularLocation>
    <subcellularLocation>
        <location>Secreted</location>
        <location>Extracellular space</location>
    </subcellularLocation>
    <subcellularLocation>
        <location evidence="5">Secreted</location>
        <location evidence="5">Extracellular space</location>
        <location evidence="5">Extracellular matrix</location>
    </subcellularLocation>
</comment>
<comment type="tissue specificity">
    <text evidence="5">Forms the fibrils of tendon, ligaments and bones. In bones, the fibrils are mineralized with calcium hydroxyapatite.</text>
</comment>
<comment type="PTM">
    <text evidence="5">Prolines at the third position of the tripeptide repeating unit (G-X-Y) are hydroxylated in some or all of the chains.</text>
</comment>
<comment type="similarity">
    <text evidence="5">Belongs to the fibrillar collagen family.</text>
</comment>
<gene>
    <name evidence="1" type="primary">COL1A2</name>
</gene>
<protein>
    <recommendedName>
        <fullName evidence="4">Collagen alpha-2(I) chain</fullName>
    </recommendedName>
    <alternativeName>
        <fullName evidence="1">Alpha-2 type I collagen</fullName>
    </alternativeName>
</protein>
<accession>C0HJN6</accession>
<organism evidence="4">
    <name type="scientific">Hippopotamus amphibius</name>
    <name type="common">Hippopotamus</name>
    <dbReference type="NCBI Taxonomy" id="9833"/>
    <lineage>
        <taxon>Eukaryota</taxon>
        <taxon>Metazoa</taxon>
        <taxon>Chordata</taxon>
        <taxon>Craniata</taxon>
        <taxon>Vertebrata</taxon>
        <taxon>Euteleostomi</taxon>
        <taxon>Mammalia</taxon>
        <taxon>Eutheria</taxon>
        <taxon>Laurasiatheria</taxon>
        <taxon>Artiodactyla</taxon>
        <taxon>Whippomorpha</taxon>
        <taxon>Ancodonta</taxon>
        <taxon>Hippopotamidae</taxon>
        <taxon>Hippopotamus</taxon>
    </lineage>
</organism>